<protein>
    <recommendedName>
        <fullName evidence="1">Sugar fermentation stimulation protein homolog</fullName>
    </recommendedName>
</protein>
<sequence length="237" mass="26506">MQFPSLSCGILIKRYKRFLADILLPNGEQITLHCPNTGAMTGCATAGDTVWFSTSDNPKRKYAHTWELTQTQAGDFICVNTQRANQLVQEALEKRWIAELAEYQTVLPEQKYGSENSRIDFLLKADNQPDCFVEVKSTTLLTENGLGMFPDAKTERGQKHLRELAAIAESGQQAVIFFAILHTGIQRFAVAKQIDPQYAALFEQAKNTGVKVLAYKAQIELVQGKPEAMNLQFSCEI</sequence>
<name>SFSA_ACTPJ</name>
<proteinExistence type="inferred from homology"/>
<evidence type="ECO:0000255" key="1">
    <source>
        <dbReference type="HAMAP-Rule" id="MF_00095"/>
    </source>
</evidence>
<gene>
    <name evidence="1" type="primary">sfsA</name>
    <name type="ordered locus">APJL_1773</name>
</gene>
<reference key="1">
    <citation type="journal article" date="2008" name="PLoS ONE">
        <title>Genome biology of Actinobacillus pleuropneumoniae JL03, an isolate of serotype 3 prevalent in China.</title>
        <authorList>
            <person name="Xu Z."/>
            <person name="Zhou Y."/>
            <person name="Li L."/>
            <person name="Zhou R."/>
            <person name="Xiao S."/>
            <person name="Wan Y."/>
            <person name="Zhang S."/>
            <person name="Wang K."/>
            <person name="Li W."/>
            <person name="Li L."/>
            <person name="Jin H."/>
            <person name="Kang M."/>
            <person name="Dalai B."/>
            <person name="Li T."/>
            <person name="Liu L."/>
            <person name="Cheng Y."/>
            <person name="Zhang L."/>
            <person name="Xu T."/>
            <person name="Zheng H."/>
            <person name="Pu S."/>
            <person name="Wang B."/>
            <person name="Gu W."/>
            <person name="Zhang X.L."/>
            <person name="Zhu G.-F."/>
            <person name="Wang S."/>
            <person name="Zhao G.-P."/>
            <person name="Chen H."/>
        </authorList>
    </citation>
    <scope>NUCLEOTIDE SEQUENCE [LARGE SCALE GENOMIC DNA]</scope>
    <source>
        <strain>JL03</strain>
    </source>
</reference>
<accession>B0BSG6</accession>
<organism>
    <name type="scientific">Actinobacillus pleuropneumoniae serotype 3 (strain JL03)</name>
    <dbReference type="NCBI Taxonomy" id="434271"/>
    <lineage>
        <taxon>Bacteria</taxon>
        <taxon>Pseudomonadati</taxon>
        <taxon>Pseudomonadota</taxon>
        <taxon>Gammaproteobacteria</taxon>
        <taxon>Pasteurellales</taxon>
        <taxon>Pasteurellaceae</taxon>
        <taxon>Actinobacillus</taxon>
    </lineage>
</organism>
<feature type="chain" id="PRO_0000340129" description="Sugar fermentation stimulation protein homolog">
    <location>
        <begin position="1"/>
        <end position="237"/>
    </location>
</feature>
<comment type="similarity">
    <text evidence="1">Belongs to the SfsA family.</text>
</comment>
<dbReference type="EMBL" id="CP000687">
    <property type="protein sequence ID" value="ABY70323.1"/>
    <property type="molecule type" value="Genomic_DNA"/>
</dbReference>
<dbReference type="RefSeq" id="WP_012263376.1">
    <property type="nucleotide sequence ID" value="NC_010278.1"/>
</dbReference>
<dbReference type="SMR" id="B0BSG6"/>
<dbReference type="KEGG" id="apj:APJL_1773"/>
<dbReference type="HOGENOM" id="CLU_052299_2_0_6"/>
<dbReference type="Proteomes" id="UP000008547">
    <property type="component" value="Chromosome"/>
</dbReference>
<dbReference type="GO" id="GO:0003677">
    <property type="term" value="F:DNA binding"/>
    <property type="evidence" value="ECO:0007669"/>
    <property type="project" value="InterPro"/>
</dbReference>
<dbReference type="CDD" id="cd22359">
    <property type="entry name" value="SfsA-like_bacterial"/>
    <property type="match status" value="1"/>
</dbReference>
<dbReference type="FunFam" id="2.40.50.580:FF:000001">
    <property type="entry name" value="Sugar fermentation stimulation protein A"/>
    <property type="match status" value="1"/>
</dbReference>
<dbReference type="FunFam" id="3.40.1350.60:FF:000001">
    <property type="entry name" value="Sugar fermentation stimulation protein A"/>
    <property type="match status" value="1"/>
</dbReference>
<dbReference type="Gene3D" id="2.40.50.580">
    <property type="match status" value="1"/>
</dbReference>
<dbReference type="Gene3D" id="3.40.1350.60">
    <property type="match status" value="1"/>
</dbReference>
<dbReference type="HAMAP" id="MF_00095">
    <property type="entry name" value="SfsA"/>
    <property type="match status" value="1"/>
</dbReference>
<dbReference type="InterPro" id="IPR018120">
    <property type="entry name" value="Glyco_hydro_1_AS"/>
</dbReference>
<dbReference type="InterPro" id="IPR005224">
    <property type="entry name" value="SfsA"/>
</dbReference>
<dbReference type="InterPro" id="IPR040452">
    <property type="entry name" value="SfsA_C"/>
</dbReference>
<dbReference type="InterPro" id="IPR041465">
    <property type="entry name" value="SfsA_N"/>
</dbReference>
<dbReference type="NCBIfam" id="TIGR00230">
    <property type="entry name" value="sfsA"/>
    <property type="match status" value="1"/>
</dbReference>
<dbReference type="PANTHER" id="PTHR30545">
    <property type="entry name" value="SUGAR FERMENTATION STIMULATION PROTEIN A"/>
    <property type="match status" value="1"/>
</dbReference>
<dbReference type="PANTHER" id="PTHR30545:SF2">
    <property type="entry name" value="SUGAR FERMENTATION STIMULATION PROTEIN A"/>
    <property type="match status" value="1"/>
</dbReference>
<dbReference type="Pfam" id="PF03749">
    <property type="entry name" value="SfsA"/>
    <property type="match status" value="1"/>
</dbReference>
<dbReference type="Pfam" id="PF17746">
    <property type="entry name" value="SfsA_N"/>
    <property type="match status" value="1"/>
</dbReference>